<dbReference type="EMBL" id="AY102634">
    <property type="protein sequence ID" value="AAM52876.1"/>
    <property type="molecule type" value="mRNA"/>
</dbReference>
<dbReference type="EMBL" id="AC004786">
    <property type="protein sequence ID" value="AAC32431.1"/>
    <property type="molecule type" value="Genomic_DNA"/>
</dbReference>
<dbReference type="EMBL" id="CP002685">
    <property type="protein sequence ID" value="AEC07363.1"/>
    <property type="molecule type" value="Genomic_DNA"/>
</dbReference>
<dbReference type="EMBL" id="AB493560">
    <property type="protein sequence ID" value="BAH30398.1"/>
    <property type="molecule type" value="mRNA"/>
</dbReference>
<dbReference type="PIR" id="E84617">
    <property type="entry name" value="E84617"/>
</dbReference>
<dbReference type="RefSeq" id="NP_179869.1">
    <property type="nucleotide sequence ID" value="NM_127849.4"/>
</dbReference>
<dbReference type="BioGRID" id="2168">
    <property type="interactions" value="20"/>
</dbReference>
<dbReference type="FunCoup" id="O81001">
    <property type="interactions" value="324"/>
</dbReference>
<dbReference type="IntAct" id="O81001">
    <property type="interactions" value="23"/>
</dbReference>
<dbReference type="STRING" id="3702.O81001"/>
<dbReference type="iPTMnet" id="O81001"/>
<dbReference type="PaxDb" id="3702-AT2G22840.1"/>
<dbReference type="ProteomicsDB" id="248483"/>
<dbReference type="EnsemblPlants" id="AT2G22840.1">
    <property type="protein sequence ID" value="AT2G22840.1"/>
    <property type="gene ID" value="AT2G22840"/>
</dbReference>
<dbReference type="GeneID" id="816815"/>
<dbReference type="Gramene" id="AT2G22840.1">
    <property type="protein sequence ID" value="AT2G22840.1"/>
    <property type="gene ID" value="AT2G22840"/>
</dbReference>
<dbReference type="KEGG" id="ath:AT2G22840"/>
<dbReference type="Araport" id="AT2G22840"/>
<dbReference type="TAIR" id="AT2G22840">
    <property type="gene designation" value="GRF1"/>
</dbReference>
<dbReference type="eggNOG" id="ENOG502QRK7">
    <property type="taxonomic scope" value="Eukaryota"/>
</dbReference>
<dbReference type="HOGENOM" id="CLU_038207_0_0_1"/>
<dbReference type="InParanoid" id="O81001"/>
<dbReference type="OMA" id="GEDCWRS"/>
<dbReference type="PhylomeDB" id="O81001"/>
<dbReference type="PRO" id="PR:O81001"/>
<dbReference type="Proteomes" id="UP000006548">
    <property type="component" value="Chromosome 2"/>
</dbReference>
<dbReference type="ExpressionAtlas" id="O81001">
    <property type="expression patterns" value="baseline and differential"/>
</dbReference>
<dbReference type="GO" id="GO:0005634">
    <property type="term" value="C:nucleus"/>
    <property type="evidence" value="ECO:0000250"/>
    <property type="project" value="TAIR"/>
</dbReference>
<dbReference type="GO" id="GO:0005524">
    <property type="term" value="F:ATP binding"/>
    <property type="evidence" value="ECO:0007669"/>
    <property type="project" value="InterPro"/>
</dbReference>
<dbReference type="GO" id="GO:0000976">
    <property type="term" value="F:transcription cis-regulatory region binding"/>
    <property type="evidence" value="ECO:0000353"/>
    <property type="project" value="TAIR"/>
</dbReference>
<dbReference type="GO" id="GO:0006351">
    <property type="term" value="P:DNA-templated transcription"/>
    <property type="evidence" value="ECO:0007669"/>
    <property type="project" value="InterPro"/>
</dbReference>
<dbReference type="GO" id="GO:0019760">
    <property type="term" value="P:glucosinolate metabolic process"/>
    <property type="evidence" value="ECO:0000315"/>
    <property type="project" value="TAIR"/>
</dbReference>
<dbReference type="GO" id="GO:0006355">
    <property type="term" value="P:regulation of DNA-templated transcription"/>
    <property type="evidence" value="ECO:0007669"/>
    <property type="project" value="InterPro"/>
</dbReference>
<dbReference type="GO" id="GO:0061062">
    <property type="term" value="P:regulation of nematode larval development"/>
    <property type="evidence" value="ECO:0000315"/>
    <property type="project" value="TAIR"/>
</dbReference>
<dbReference type="GO" id="GO:0009409">
    <property type="term" value="P:response to cold"/>
    <property type="evidence" value="ECO:0000270"/>
    <property type="project" value="TAIR"/>
</dbReference>
<dbReference type="GO" id="GO:0009739">
    <property type="term" value="P:response to gibberellin"/>
    <property type="evidence" value="ECO:0000270"/>
    <property type="project" value="TAIR"/>
</dbReference>
<dbReference type="GO" id="GO:0009624">
    <property type="term" value="P:response to nematode"/>
    <property type="evidence" value="ECO:0000270"/>
    <property type="project" value="TAIR"/>
</dbReference>
<dbReference type="GO" id="GO:0048364">
    <property type="term" value="P:root development"/>
    <property type="evidence" value="ECO:0000315"/>
    <property type="project" value="TAIR"/>
</dbReference>
<dbReference type="InterPro" id="IPR014978">
    <property type="entry name" value="Gln-Leu-Gln_QLQ"/>
</dbReference>
<dbReference type="InterPro" id="IPR031137">
    <property type="entry name" value="GRF"/>
</dbReference>
<dbReference type="InterPro" id="IPR014977">
    <property type="entry name" value="WRC_dom"/>
</dbReference>
<dbReference type="PANTHER" id="PTHR31602:SF64">
    <property type="entry name" value="GROWTH-REGULATING FACTOR 1"/>
    <property type="match status" value="1"/>
</dbReference>
<dbReference type="PANTHER" id="PTHR31602">
    <property type="entry name" value="GROWTH-REGULATING FACTOR 5"/>
    <property type="match status" value="1"/>
</dbReference>
<dbReference type="Pfam" id="PF08880">
    <property type="entry name" value="QLQ"/>
    <property type="match status" value="1"/>
</dbReference>
<dbReference type="Pfam" id="PF08879">
    <property type="entry name" value="WRC"/>
    <property type="match status" value="1"/>
</dbReference>
<dbReference type="SMART" id="SM00951">
    <property type="entry name" value="QLQ"/>
    <property type="match status" value="1"/>
</dbReference>
<dbReference type="PROSITE" id="PS51666">
    <property type="entry name" value="QLQ"/>
    <property type="match status" value="1"/>
</dbReference>
<dbReference type="PROSITE" id="PS51667">
    <property type="entry name" value="WRC"/>
    <property type="match status" value="1"/>
</dbReference>
<accession>O81001</accession>
<reference key="1">
    <citation type="journal article" date="2003" name="Plant J.">
        <title>The AtGRF family of putative transcription factors is involved in leaf and cotyledon growth in Arabidopsis.</title>
        <authorList>
            <person name="Kim J.H."/>
            <person name="Choi D."/>
            <person name="Kende H."/>
        </authorList>
    </citation>
    <scope>NUCLEOTIDE SEQUENCE [MRNA]</scope>
    <scope>GENE FAMILY</scope>
    <scope>NOMENCLATURE</scope>
    <scope>FUNCTION</scope>
    <scope>TISSUE SPECIFICITY</scope>
</reference>
<reference key="2">
    <citation type="journal article" date="1999" name="Nature">
        <title>Sequence and analysis of chromosome 2 of the plant Arabidopsis thaliana.</title>
        <authorList>
            <person name="Lin X."/>
            <person name="Kaul S."/>
            <person name="Rounsley S.D."/>
            <person name="Shea T.P."/>
            <person name="Benito M.-I."/>
            <person name="Town C.D."/>
            <person name="Fujii C.Y."/>
            <person name="Mason T.M."/>
            <person name="Bowman C.L."/>
            <person name="Barnstead M.E."/>
            <person name="Feldblyum T.V."/>
            <person name="Buell C.R."/>
            <person name="Ketchum K.A."/>
            <person name="Lee J.J."/>
            <person name="Ronning C.M."/>
            <person name="Koo H.L."/>
            <person name="Moffat K.S."/>
            <person name="Cronin L.A."/>
            <person name="Shen M."/>
            <person name="Pai G."/>
            <person name="Van Aken S."/>
            <person name="Umayam L."/>
            <person name="Tallon L.J."/>
            <person name="Gill J.E."/>
            <person name="Adams M.D."/>
            <person name="Carrera A.J."/>
            <person name="Creasy T.H."/>
            <person name="Goodman H.M."/>
            <person name="Somerville C.R."/>
            <person name="Copenhaver G.P."/>
            <person name="Preuss D."/>
            <person name="Nierman W.C."/>
            <person name="White O."/>
            <person name="Eisen J.A."/>
            <person name="Salzberg S.L."/>
            <person name="Fraser C.M."/>
            <person name="Venter J.C."/>
        </authorList>
    </citation>
    <scope>NUCLEOTIDE SEQUENCE [LARGE SCALE GENOMIC DNA]</scope>
    <source>
        <strain>cv. Columbia</strain>
    </source>
</reference>
<reference key="3">
    <citation type="journal article" date="2017" name="Plant J.">
        <title>Araport11: a complete reannotation of the Arabidopsis thaliana reference genome.</title>
        <authorList>
            <person name="Cheng C.Y."/>
            <person name="Krishnakumar V."/>
            <person name="Chan A.P."/>
            <person name="Thibaud-Nissen F."/>
            <person name="Schobel S."/>
            <person name="Town C.D."/>
        </authorList>
    </citation>
    <scope>GENOME REANNOTATION</scope>
    <source>
        <strain>cv. Columbia</strain>
    </source>
</reference>
<reference key="4">
    <citation type="submission" date="2009-03" db="EMBL/GenBank/DDBJ databases">
        <title>ORF cloning and analysis of Arabidopsis transcription factor genes.</title>
        <authorList>
            <person name="Fujita M."/>
            <person name="Mizukado S."/>
            <person name="Seki M."/>
            <person name="Shinozaki K."/>
            <person name="Mitsuda N."/>
            <person name="Takiguchi Y."/>
            <person name="Takagi M."/>
        </authorList>
    </citation>
    <scope>NUCLEOTIDE SEQUENCE [LARGE SCALE MRNA]</scope>
</reference>
<reference key="5">
    <citation type="journal article" date="2004" name="Mol. Cell">
        <title>Computational identification of plant microRNAs and their targets, including a stress-induced miRNA.</title>
        <authorList>
            <person name="Jones-Rhoades M.W."/>
            <person name="Bartel D.P."/>
        </authorList>
    </citation>
    <scope>INDUCTION</scope>
</reference>
<reference key="6">
    <citation type="journal article" date="2004" name="Proc. Natl. Acad. Sci. U.S.A.">
        <title>A transcriptional coactivator, AtGIF1, is involved in regulating leaf growth and morphology in Arabidopsis.</title>
        <authorList>
            <person name="Kim J.H."/>
            <person name="Kende H."/>
        </authorList>
    </citation>
    <scope>FUNCTION</scope>
    <scope>INTERACTION WITH GIF1 AND GIF2</scope>
</reference>
<reference key="7">
    <citation type="journal article" date="2009" name="Physiol. Plantarum">
        <title>Ectopic expression of miR396 suppresses GRF target gene expression and alters leaf growth in Arabidopsis.</title>
        <authorList>
            <person name="Liu D."/>
            <person name="Song Y."/>
            <person name="Chen Z."/>
            <person name="Yu D."/>
        </authorList>
    </citation>
    <scope>INDUCTION</scope>
</reference>
<reference key="8">
    <citation type="journal article" date="2010" name="Development">
        <title>Control of cell proliferation in Arabidopsis thaliana by microRNA miR396.</title>
        <authorList>
            <person name="Rodriguez R.E."/>
            <person name="Mecchia M.A."/>
            <person name="Debernardi J.M."/>
            <person name="Schommer C."/>
            <person name="Weigel D."/>
            <person name="Palatnik J.F."/>
        </authorList>
    </citation>
    <scope>DEVELOPMENTAL STAGE</scope>
    <scope>INDUCTION</scope>
</reference>
<reference key="9">
    <citation type="journal article" date="2012" name="Plant Physiol.">
        <title>The Arabidopsis microRNA396-GRF1/GRF3 regulatory module acts as a developmental regulator in the reprogramming of root cells during cyst nematode infection.</title>
        <authorList>
            <person name="Hewezi T."/>
            <person name="Maier T.R."/>
            <person name="Nettleton D."/>
            <person name="Baum T.J."/>
        </authorList>
    </citation>
    <scope>FUNCTION</scope>
    <scope>INDUCTION</scope>
</reference>
<reference key="10">
    <citation type="journal article" date="2012" name="Plant Signal. Behav.">
        <title>Complex feedback regulations govern the expression of miRNA396 and its GRF target genes.</title>
        <authorList>
            <person name="Hewezi T."/>
            <person name="Baum T.J."/>
        </authorList>
    </citation>
    <scope>FUNCTION</scope>
</reference>
<keyword id="KW-0010">Activator</keyword>
<keyword id="KW-0539">Nucleus</keyword>
<keyword id="KW-1185">Reference proteome</keyword>
<keyword id="KW-0804">Transcription</keyword>
<keyword id="KW-0805">Transcription regulation</keyword>
<name>GRF1_ARATH</name>
<protein>
    <recommendedName>
        <fullName>Growth-regulating factor 1</fullName>
        <shortName>AtGRF1</shortName>
    </recommendedName>
    <alternativeName>
        <fullName>Transcription activator GRF1</fullName>
    </alternativeName>
</protein>
<feature type="chain" id="PRO_0000419292" description="Growth-regulating factor 1">
    <location>
        <begin position="1"/>
        <end position="530"/>
    </location>
</feature>
<feature type="domain" description="QLQ" evidence="1">
    <location>
        <begin position="133"/>
        <end position="168"/>
    </location>
</feature>
<feature type="domain" description="WRC" evidence="2">
    <location>
        <begin position="196"/>
        <end position="240"/>
    </location>
</feature>
<feature type="region of interest" description="Disordered" evidence="3">
    <location>
        <begin position="1"/>
        <end position="41"/>
    </location>
</feature>
<feature type="region of interest" description="Disordered" evidence="3">
    <location>
        <begin position="223"/>
        <end position="250"/>
    </location>
</feature>
<feature type="region of interest" description="Disordered" evidence="3">
    <location>
        <begin position="485"/>
        <end position="530"/>
    </location>
</feature>
<feature type="short sequence motif" description="Bipartite nuclear localization signal" evidence="2">
    <location>
        <begin position="201"/>
        <end position="211"/>
    </location>
</feature>
<feature type="short sequence motif" description="Bipartite nuclear localization signal" evidence="2">
    <location>
        <begin position="229"/>
        <end position="236"/>
    </location>
</feature>
<feature type="compositionally biased region" description="Polar residues" evidence="3">
    <location>
        <begin position="11"/>
        <end position="27"/>
    </location>
</feature>
<feature type="compositionally biased region" description="Basic and acidic residues" evidence="3">
    <location>
        <begin position="28"/>
        <end position="41"/>
    </location>
</feature>
<feature type="compositionally biased region" description="Low complexity" evidence="3">
    <location>
        <begin position="485"/>
        <end position="508"/>
    </location>
</feature>
<feature type="compositionally biased region" description="Polar residues" evidence="3">
    <location>
        <begin position="519"/>
        <end position="530"/>
    </location>
</feature>
<gene>
    <name type="primary">GRF1</name>
    <name type="ordered locus">At2g22840</name>
    <name type="ORF">T20K9.5</name>
</gene>
<organism>
    <name type="scientific">Arabidopsis thaliana</name>
    <name type="common">Mouse-ear cress</name>
    <dbReference type="NCBI Taxonomy" id="3702"/>
    <lineage>
        <taxon>Eukaryota</taxon>
        <taxon>Viridiplantae</taxon>
        <taxon>Streptophyta</taxon>
        <taxon>Embryophyta</taxon>
        <taxon>Tracheophyta</taxon>
        <taxon>Spermatophyta</taxon>
        <taxon>Magnoliopsida</taxon>
        <taxon>eudicotyledons</taxon>
        <taxon>Gunneridae</taxon>
        <taxon>Pentapetalae</taxon>
        <taxon>rosids</taxon>
        <taxon>malvids</taxon>
        <taxon>Brassicales</taxon>
        <taxon>Brassicaceae</taxon>
        <taxon>Camelineae</taxon>
        <taxon>Arabidopsis</taxon>
    </lineage>
</organism>
<sequence>MDLGVRVSGHETVSSPGQTELGSGFSNKQERSGFDGEDCWRSSKLSRTSTDGFSSSPASAKTLSFHQGIPLLRSTTINDPRKGQEHMLSFSSASGKSDVSPYLQYCRNSGYGLGGMMNTSNMHGNLLTGVKGPFSLTQWAELEQQALIYKYITANVPVPSSLLLSLKKSFFPYGSLPPNSFGWGSFHLGFSGGNMDPEPGRCRRTDGKKWRCSRDAVPDQKYCERHINRGRHRSRKPVEGQNGHNTNAAAAASAAAASTAAAVSKAAAGTSAVAMRGSDNNNSLAAAVGTQHHTNNQSTDSLANRVQNSRGASVFPATMNLQSKETHPKQSNNPFEFGLISSDSLLNPSHKQASYATSSKGFGSYLDFGNQAKHAGNHNNVDSWPEELKSDWTQLSMSIPMAPSSPVQDKLALSPLRLSREFDPAIHMGLGVNTEFLDPGKKTNNWIPISWGNNNSMGGPLGEVLNSTTNSPKFGSSPTGVLQKSTFGSLSNSSSASSTIIGDNNNKNGDGKDPLGPTTLMNTSATAPSL</sequence>
<proteinExistence type="evidence at protein level"/>
<comment type="function">
    <text evidence="4 6 9 10">Transcription activator that plays a role in the regulation of cell expansion in leaf and cotyledons tissues. Component of a network formed by miR396, the GRFs and their interacting factors (GIFs) acting in the regulation of meristem function, at least partially through the control of cell proliferation. microRNA396-GRF1/GRF3 regulatory module acts as a developmental regulator in the reprogramming of root cells during cyst nematode infection, leading to the formation of the syncytium.</text>
</comment>
<comment type="subunit">
    <text evidence="6">Interacts with GIF1 and GIF2.</text>
</comment>
<comment type="interaction">
    <interactant intactId="EBI-1396842">
        <id>O81001</id>
    </interactant>
    <interactant intactId="EBI-1396623">
        <id>Q8L8A5</id>
        <label>GIF1</label>
    </interactant>
    <organismsDiffer>false</organismsDiffer>
    <experiments>6</experiments>
</comment>
<comment type="interaction">
    <interactant intactId="EBI-1396842">
        <id>O81001</id>
    </interactant>
    <interactant intactId="EBI-1396863">
        <id>Q9MAL9</id>
        <label>GIF2</label>
    </interactant>
    <organismsDiffer>false</organismsDiffer>
    <experiments>4</experiments>
</comment>
<comment type="interaction">
    <interactant intactId="EBI-1396842">
        <id>O81001</id>
    </interactant>
    <interactant intactId="EBI-15194507">
        <id>Q93VH6</id>
        <label>GIF3</label>
    </interactant>
    <organismsDiffer>false</organismsDiffer>
    <experiments>3</experiments>
</comment>
<comment type="subcellular location">
    <subcellularLocation>
        <location evidence="2">Nucleus</location>
    </subcellularLocation>
</comment>
<comment type="tissue specificity">
    <text evidence="4">Strongly expressed in actively growing and developing tissues, such as roots, upper stems, and shoot tips containing the shoot apical meristem (SAM) and flower buds. Also expressed in mature flowers, but weakly expressed in mature stems and leaves.</text>
</comment>
<comment type="developmental stage">
    <text evidence="8">Expressed during the early stages of leaf development and expression decreases with the maturation of the leaf.</text>
</comment>
<comment type="induction">
    <text evidence="5 7 8 9">microRNA 396 (miR396a or miR396b) negatively regulates growth-regulating factors (GRF1-4 and GRF7-9). Up-regulated in response to cyst nematode infection.</text>
</comment>
<comment type="domain">
    <text>The QLQ domain and WRC domain may be involved in protein-protein interaction and DNA-binding, respectively.</text>
</comment>
<comment type="miscellaneous">
    <text>Overexpression mutant display larger leaves and cotyledons, as well as a delayed bolting of the inflorescence stem when compared to wild-type plants.</text>
</comment>
<comment type="similarity">
    <text evidence="11">Belongs to the GRF family.</text>
</comment>
<evidence type="ECO:0000255" key="1">
    <source>
        <dbReference type="PROSITE-ProRule" id="PRU01001"/>
    </source>
</evidence>
<evidence type="ECO:0000255" key="2">
    <source>
        <dbReference type="PROSITE-ProRule" id="PRU01002"/>
    </source>
</evidence>
<evidence type="ECO:0000256" key="3">
    <source>
        <dbReference type="SAM" id="MobiDB-lite"/>
    </source>
</evidence>
<evidence type="ECO:0000269" key="4">
    <source>
    </source>
</evidence>
<evidence type="ECO:0000269" key="5">
    <source>
    </source>
</evidence>
<evidence type="ECO:0000269" key="6">
    <source>
    </source>
</evidence>
<evidence type="ECO:0000269" key="7">
    <source>
    </source>
</evidence>
<evidence type="ECO:0000269" key="8">
    <source>
    </source>
</evidence>
<evidence type="ECO:0000269" key="9">
    <source>
    </source>
</evidence>
<evidence type="ECO:0000269" key="10">
    <source>
    </source>
</evidence>
<evidence type="ECO:0000305" key="11"/>